<feature type="chain" id="PRO_1000001612" description="Recombination protein RecR">
    <location>
        <begin position="1"/>
        <end position="201"/>
    </location>
</feature>
<feature type="domain" description="Toprim" evidence="1">
    <location>
        <begin position="81"/>
        <end position="176"/>
    </location>
</feature>
<feature type="zinc finger region" description="C4-type" evidence="1">
    <location>
        <begin position="57"/>
        <end position="72"/>
    </location>
</feature>
<gene>
    <name evidence="1" type="primary">recR</name>
    <name type="ordered locus">SDY_0447</name>
</gene>
<reference key="1">
    <citation type="journal article" date="2005" name="Nucleic Acids Res.">
        <title>Genome dynamics and diversity of Shigella species, the etiologic agents of bacillary dysentery.</title>
        <authorList>
            <person name="Yang F."/>
            <person name="Yang J."/>
            <person name="Zhang X."/>
            <person name="Chen L."/>
            <person name="Jiang Y."/>
            <person name="Yan Y."/>
            <person name="Tang X."/>
            <person name="Wang J."/>
            <person name="Xiong Z."/>
            <person name="Dong J."/>
            <person name="Xue Y."/>
            <person name="Zhu Y."/>
            <person name="Xu X."/>
            <person name="Sun L."/>
            <person name="Chen S."/>
            <person name="Nie H."/>
            <person name="Peng J."/>
            <person name="Xu J."/>
            <person name="Wang Y."/>
            <person name="Yuan Z."/>
            <person name="Wen Y."/>
            <person name="Yao Z."/>
            <person name="Shen Y."/>
            <person name="Qiang B."/>
            <person name="Hou Y."/>
            <person name="Yu J."/>
            <person name="Jin Q."/>
        </authorList>
    </citation>
    <scope>NUCLEOTIDE SEQUENCE [LARGE SCALE GENOMIC DNA]</scope>
    <source>
        <strain>Sd197</strain>
    </source>
</reference>
<organism>
    <name type="scientific">Shigella dysenteriae serotype 1 (strain Sd197)</name>
    <dbReference type="NCBI Taxonomy" id="300267"/>
    <lineage>
        <taxon>Bacteria</taxon>
        <taxon>Pseudomonadati</taxon>
        <taxon>Pseudomonadota</taxon>
        <taxon>Gammaproteobacteria</taxon>
        <taxon>Enterobacterales</taxon>
        <taxon>Enterobacteriaceae</taxon>
        <taxon>Shigella</taxon>
    </lineage>
</organism>
<dbReference type="EMBL" id="CP000034">
    <property type="protein sequence ID" value="ABB60655.1"/>
    <property type="molecule type" value="Genomic_DNA"/>
</dbReference>
<dbReference type="RefSeq" id="WP_001195032.1">
    <property type="nucleotide sequence ID" value="NC_007606.1"/>
</dbReference>
<dbReference type="RefSeq" id="YP_402144.1">
    <property type="nucleotide sequence ID" value="NC_007606.1"/>
</dbReference>
<dbReference type="SMR" id="Q32J52"/>
<dbReference type="STRING" id="300267.SDY_0447"/>
<dbReference type="EnsemblBacteria" id="ABB60655">
    <property type="protein sequence ID" value="ABB60655"/>
    <property type="gene ID" value="SDY_0447"/>
</dbReference>
<dbReference type="KEGG" id="sdy:SDY_0447"/>
<dbReference type="PATRIC" id="fig|300267.13.peg.530"/>
<dbReference type="HOGENOM" id="CLU_060739_1_2_6"/>
<dbReference type="Proteomes" id="UP000002716">
    <property type="component" value="Chromosome"/>
</dbReference>
<dbReference type="GO" id="GO:0003677">
    <property type="term" value="F:DNA binding"/>
    <property type="evidence" value="ECO:0007669"/>
    <property type="project" value="UniProtKB-UniRule"/>
</dbReference>
<dbReference type="GO" id="GO:0008270">
    <property type="term" value="F:zinc ion binding"/>
    <property type="evidence" value="ECO:0007669"/>
    <property type="project" value="UniProtKB-KW"/>
</dbReference>
<dbReference type="GO" id="GO:0006310">
    <property type="term" value="P:DNA recombination"/>
    <property type="evidence" value="ECO:0007669"/>
    <property type="project" value="UniProtKB-UniRule"/>
</dbReference>
<dbReference type="GO" id="GO:0006281">
    <property type="term" value="P:DNA repair"/>
    <property type="evidence" value="ECO:0007669"/>
    <property type="project" value="UniProtKB-UniRule"/>
</dbReference>
<dbReference type="CDD" id="cd01025">
    <property type="entry name" value="TOPRIM_recR"/>
    <property type="match status" value="1"/>
</dbReference>
<dbReference type="FunFam" id="1.10.8.420:FF:000001">
    <property type="entry name" value="Recombination protein RecR"/>
    <property type="match status" value="1"/>
</dbReference>
<dbReference type="FunFam" id="3.40.1360.10:FF:000001">
    <property type="entry name" value="Recombination protein RecR"/>
    <property type="match status" value="1"/>
</dbReference>
<dbReference type="Gene3D" id="3.40.1360.10">
    <property type="match status" value="1"/>
</dbReference>
<dbReference type="Gene3D" id="6.10.250.240">
    <property type="match status" value="1"/>
</dbReference>
<dbReference type="Gene3D" id="1.10.8.420">
    <property type="entry name" value="RecR Domain 1"/>
    <property type="match status" value="1"/>
</dbReference>
<dbReference type="HAMAP" id="MF_00017">
    <property type="entry name" value="RecR"/>
    <property type="match status" value="1"/>
</dbReference>
<dbReference type="InterPro" id="IPR000093">
    <property type="entry name" value="DNA_Rcmb_RecR"/>
</dbReference>
<dbReference type="InterPro" id="IPR023627">
    <property type="entry name" value="Rcmb_RecR"/>
</dbReference>
<dbReference type="InterPro" id="IPR015967">
    <property type="entry name" value="Rcmb_RecR_Znf"/>
</dbReference>
<dbReference type="InterPro" id="IPR006171">
    <property type="entry name" value="TOPRIM_dom"/>
</dbReference>
<dbReference type="InterPro" id="IPR034137">
    <property type="entry name" value="TOPRIM_RecR"/>
</dbReference>
<dbReference type="NCBIfam" id="TIGR00615">
    <property type="entry name" value="recR"/>
    <property type="match status" value="1"/>
</dbReference>
<dbReference type="PANTHER" id="PTHR30446">
    <property type="entry name" value="RECOMBINATION PROTEIN RECR"/>
    <property type="match status" value="1"/>
</dbReference>
<dbReference type="PANTHER" id="PTHR30446:SF0">
    <property type="entry name" value="RECOMBINATION PROTEIN RECR"/>
    <property type="match status" value="1"/>
</dbReference>
<dbReference type="Pfam" id="PF21175">
    <property type="entry name" value="RecR_C"/>
    <property type="match status" value="1"/>
</dbReference>
<dbReference type="Pfam" id="PF21176">
    <property type="entry name" value="RecR_HhH"/>
    <property type="match status" value="1"/>
</dbReference>
<dbReference type="Pfam" id="PF02132">
    <property type="entry name" value="RecR_ZnF"/>
    <property type="match status" value="1"/>
</dbReference>
<dbReference type="Pfam" id="PF13662">
    <property type="entry name" value="Toprim_4"/>
    <property type="match status" value="1"/>
</dbReference>
<dbReference type="SMART" id="SM00493">
    <property type="entry name" value="TOPRIM"/>
    <property type="match status" value="1"/>
</dbReference>
<dbReference type="SUPFAM" id="SSF111304">
    <property type="entry name" value="Recombination protein RecR"/>
    <property type="match status" value="1"/>
</dbReference>
<dbReference type="PROSITE" id="PS01300">
    <property type="entry name" value="RECR"/>
    <property type="match status" value="1"/>
</dbReference>
<dbReference type="PROSITE" id="PS50880">
    <property type="entry name" value="TOPRIM"/>
    <property type="match status" value="1"/>
</dbReference>
<name>RECR_SHIDS</name>
<sequence length="201" mass="21953">MQTSPLLTQLMEALRCLSGVGPKSAQRMAFTLLQRDRSGGMRLAQALTRAMSEIGHCADCRTFTEQEVCNICSNPRRQENGQICVVESPADIYAIEQTGQFSGRYFVLMGHLSPLDGIGPDDIGLDRLEQRLAEEKITEVILATNPTVEGEATANYIAELCAQYDVEASRIAHGVPVGGELEMVDGTTLSHSLAGRHKIRF</sequence>
<accession>Q32J52</accession>
<evidence type="ECO:0000255" key="1">
    <source>
        <dbReference type="HAMAP-Rule" id="MF_00017"/>
    </source>
</evidence>
<keyword id="KW-0227">DNA damage</keyword>
<keyword id="KW-0233">DNA recombination</keyword>
<keyword id="KW-0234">DNA repair</keyword>
<keyword id="KW-0479">Metal-binding</keyword>
<keyword id="KW-1185">Reference proteome</keyword>
<keyword id="KW-0862">Zinc</keyword>
<keyword id="KW-0863">Zinc-finger</keyword>
<protein>
    <recommendedName>
        <fullName evidence="1">Recombination protein RecR</fullName>
    </recommendedName>
</protein>
<comment type="function">
    <text evidence="1">May play a role in DNA repair. It seems to be involved in an RecBC-independent recombinational process of DNA repair. It may act with RecF and RecO.</text>
</comment>
<comment type="similarity">
    <text evidence="1">Belongs to the RecR family.</text>
</comment>
<proteinExistence type="inferred from homology"/>